<reference key="1">
    <citation type="journal article" date="2019" name="Mol. Plant Pathol.">
        <title>Recognition of lettuce downy mildew effector BLR38 in Lactuca serriola LS102 requires two unlinked loci.</title>
        <authorList>
            <person name="Pelgrom A.J.E."/>
            <person name="Eikelhof J."/>
            <person name="Elberse J."/>
            <person name="Meisrimler C.N."/>
            <person name="Raedts R."/>
            <person name="Klein J."/>
            <person name="Van den Ackerveken G."/>
        </authorList>
    </citation>
    <scope>NUCLEOTIDE SEQUENCE [MRNA]</scope>
    <scope>DOMAIN</scope>
    <scope>FUNCTION</scope>
    <scope>SUBCELLULAR LOCATION</scope>
    <source>
        <strain>Race Bl:24</strain>
    </source>
</reference>
<keyword id="KW-0325">Glycoprotein</keyword>
<keyword id="KW-1032">Host cell membrane</keyword>
<keyword id="KW-1043">Host membrane</keyword>
<keyword id="KW-0472">Membrane</keyword>
<keyword id="KW-0964">Secreted</keyword>
<keyword id="KW-0732">Signal</keyword>
<protein>
    <recommendedName>
        <fullName evidence="4">RxLR effector protein BLN06</fullName>
    </recommendedName>
</protein>
<dbReference type="EMBL" id="MG686578">
    <property type="protein sequence ID" value="AYE92122.1"/>
    <property type="molecule type" value="mRNA"/>
</dbReference>
<dbReference type="SMR" id="A0A3B7TLV2"/>
<dbReference type="GlyCosmos" id="A0A3B7TLV2">
    <property type="glycosylation" value="1 site, No reported glycans"/>
</dbReference>
<dbReference type="VEuPathDB" id="FungiDB:CCR75_008226"/>
<dbReference type="GO" id="GO:0005576">
    <property type="term" value="C:extracellular region"/>
    <property type="evidence" value="ECO:0007669"/>
    <property type="project" value="UniProtKB-SubCell"/>
</dbReference>
<dbReference type="GO" id="GO:0020002">
    <property type="term" value="C:host cell plasma membrane"/>
    <property type="evidence" value="ECO:0007669"/>
    <property type="project" value="UniProtKB-SubCell"/>
</dbReference>
<dbReference type="GO" id="GO:0016020">
    <property type="term" value="C:membrane"/>
    <property type="evidence" value="ECO:0007669"/>
    <property type="project" value="UniProtKB-KW"/>
</dbReference>
<comment type="function">
    <text evidence="3">Secreted effector that triggers a robust hypersensitive response (HR) in Lactuca serriola LS102. The response to BLN06 was visible as chlorosis but not as strong necrosis.</text>
</comment>
<comment type="subcellular location">
    <subcellularLocation>
        <location evidence="3">Secreted</location>
    </subcellularLocation>
    <subcellularLocation>
        <location evidence="3">Host cell membrane</location>
    </subcellularLocation>
</comment>
<comment type="domain">
    <text evidence="6">Has the canonical EER motif, but lacks the canonical translocation motif RxLR, which characterizes most oomycete effectors identified so far.</text>
</comment>
<comment type="similarity">
    <text evidence="5">Belongs to the RxLR effector family.</text>
</comment>
<organism>
    <name type="scientific">Bremia lactucae</name>
    <name type="common">Lettuce downy mildew</name>
    <dbReference type="NCBI Taxonomy" id="4779"/>
    <lineage>
        <taxon>Eukaryota</taxon>
        <taxon>Sar</taxon>
        <taxon>Stramenopiles</taxon>
        <taxon>Oomycota</taxon>
        <taxon>Peronosporales</taxon>
        <taxon>Peronosporaceae</taxon>
        <taxon>Bremia</taxon>
    </lineage>
</organism>
<name>BLN06_BRELC</name>
<accession>A0A3B7TLV2</accession>
<evidence type="ECO:0000255" key="1"/>
<evidence type="ECO:0000255" key="2">
    <source>
        <dbReference type="PROSITE-ProRule" id="PRU00498"/>
    </source>
</evidence>
<evidence type="ECO:0000269" key="3">
    <source>
    </source>
</evidence>
<evidence type="ECO:0000303" key="4">
    <source>
    </source>
</evidence>
<evidence type="ECO:0000305" key="5"/>
<evidence type="ECO:0000305" key="6">
    <source>
    </source>
</evidence>
<feature type="signal peptide" evidence="1">
    <location>
        <begin position="1"/>
        <end position="20"/>
    </location>
</feature>
<feature type="chain" id="PRO_5017662402" description="RxLR effector protein BLN06" evidence="1">
    <location>
        <begin position="21"/>
        <end position="502"/>
    </location>
</feature>
<feature type="short sequence motif" description="dEER" evidence="6">
    <location>
        <begin position="50"/>
        <end position="53"/>
    </location>
</feature>
<feature type="glycosylation site" description="N-linked (GlcNAc...) asparagine" evidence="2">
    <location>
        <position position="38"/>
    </location>
</feature>
<sequence>MTLLHCWLLLVGHLASTAYADFITKDFKSLPPPAYDTNATQALVPYNAALEERNGPSSSTALLQYIDHKPGLMKKLLAGLSIRFAPPTMKVISTPTDMLRIDKIKNNIIKSSQWKRWARSLLEQNSMQNSHVIITKKMMDDLKPTNFFLVLLEASKDKNTKAVAKILEETQFARWCTIEHESISPMEFYDVLQLNLNEPIAYMERLPVLLRYWKYYKSVHSPMSSVATPKDIIDKQTVNRFGPYWKHTGEIAELLRLDFDSDSFFNHPARNVWLDLMKTYLDDTKTAEPLMIKTFQLLGNAAAKNLQNNVYSPIHFAERWIQANLQPIDVVTILGLDIHDSNLATNSAFSFLKVFIEKFLVNHPEADTTVVKIFSRLGSDESEKALALRKSFVSFFLRTPKFTPKTVMSIFDLTISADYVEKNPVWAIWMEYVNVYLVKNKVCPEGPLADTLEFLGSTAAADGVVRKKSIELLYSSWSGKTSQDTRIKQFLTAAARLNQLEL</sequence>
<proteinExistence type="evidence at transcript level"/>
<gene>
    <name evidence="4" type="primary">BLN06</name>
</gene>